<protein>
    <recommendedName>
        <fullName evidence="1">Large ribosomal subunit protein uL29</fullName>
    </recommendedName>
    <alternativeName>
        <fullName evidence="2">50S ribosomal protein L29</fullName>
    </alternativeName>
</protein>
<organism>
    <name type="scientific">Staphylococcus aureus (strain JH9)</name>
    <dbReference type="NCBI Taxonomy" id="359786"/>
    <lineage>
        <taxon>Bacteria</taxon>
        <taxon>Bacillati</taxon>
        <taxon>Bacillota</taxon>
        <taxon>Bacilli</taxon>
        <taxon>Bacillales</taxon>
        <taxon>Staphylococcaceae</taxon>
        <taxon>Staphylococcus</taxon>
    </lineage>
</organism>
<keyword id="KW-0687">Ribonucleoprotein</keyword>
<keyword id="KW-0689">Ribosomal protein</keyword>
<reference key="1">
    <citation type="submission" date="2007-05" db="EMBL/GenBank/DDBJ databases">
        <title>Complete sequence of chromosome of Staphylococcus aureus subsp. aureus JH9.</title>
        <authorList>
            <consortium name="US DOE Joint Genome Institute"/>
            <person name="Copeland A."/>
            <person name="Lucas S."/>
            <person name="Lapidus A."/>
            <person name="Barry K."/>
            <person name="Detter J.C."/>
            <person name="Glavina del Rio T."/>
            <person name="Hammon N."/>
            <person name="Israni S."/>
            <person name="Pitluck S."/>
            <person name="Chain P."/>
            <person name="Malfatti S."/>
            <person name="Shin M."/>
            <person name="Vergez L."/>
            <person name="Schmutz J."/>
            <person name="Larimer F."/>
            <person name="Land M."/>
            <person name="Hauser L."/>
            <person name="Kyrpides N."/>
            <person name="Kim E."/>
            <person name="Tomasz A."/>
            <person name="Richardson P."/>
        </authorList>
    </citation>
    <scope>NUCLEOTIDE SEQUENCE [LARGE SCALE GENOMIC DNA]</scope>
    <source>
        <strain>JH9</strain>
    </source>
</reference>
<proteinExistence type="inferred from homology"/>
<feature type="chain" id="PRO_1000079910" description="Large ribosomal subunit protein uL29">
    <location>
        <begin position="1"/>
        <end position="69"/>
    </location>
</feature>
<dbReference type="EMBL" id="CP000703">
    <property type="protein sequence ID" value="ABQ50049.1"/>
    <property type="molecule type" value="Genomic_DNA"/>
</dbReference>
<dbReference type="RefSeq" id="WP_000644737.1">
    <property type="nucleotide sequence ID" value="NC_009487.1"/>
</dbReference>
<dbReference type="SMR" id="A5IV26"/>
<dbReference type="GeneID" id="98346554"/>
<dbReference type="KEGG" id="saj:SaurJH9_2269"/>
<dbReference type="HOGENOM" id="CLU_158491_5_2_9"/>
<dbReference type="GO" id="GO:0022625">
    <property type="term" value="C:cytosolic large ribosomal subunit"/>
    <property type="evidence" value="ECO:0007669"/>
    <property type="project" value="TreeGrafter"/>
</dbReference>
<dbReference type="GO" id="GO:0003735">
    <property type="term" value="F:structural constituent of ribosome"/>
    <property type="evidence" value="ECO:0007669"/>
    <property type="project" value="InterPro"/>
</dbReference>
<dbReference type="GO" id="GO:0006412">
    <property type="term" value="P:translation"/>
    <property type="evidence" value="ECO:0007669"/>
    <property type="project" value="UniProtKB-UniRule"/>
</dbReference>
<dbReference type="CDD" id="cd00427">
    <property type="entry name" value="Ribosomal_L29_HIP"/>
    <property type="match status" value="1"/>
</dbReference>
<dbReference type="FunFam" id="1.10.287.310:FF:000001">
    <property type="entry name" value="50S ribosomal protein L29"/>
    <property type="match status" value="1"/>
</dbReference>
<dbReference type="Gene3D" id="1.10.287.310">
    <property type="match status" value="1"/>
</dbReference>
<dbReference type="HAMAP" id="MF_00374">
    <property type="entry name" value="Ribosomal_uL29"/>
    <property type="match status" value="1"/>
</dbReference>
<dbReference type="InterPro" id="IPR050063">
    <property type="entry name" value="Ribosomal_protein_uL29"/>
</dbReference>
<dbReference type="InterPro" id="IPR001854">
    <property type="entry name" value="Ribosomal_uL29"/>
</dbReference>
<dbReference type="InterPro" id="IPR036049">
    <property type="entry name" value="Ribosomal_uL29_sf"/>
</dbReference>
<dbReference type="NCBIfam" id="TIGR00012">
    <property type="entry name" value="L29"/>
    <property type="match status" value="1"/>
</dbReference>
<dbReference type="PANTHER" id="PTHR10916">
    <property type="entry name" value="60S RIBOSOMAL PROTEIN L35/50S RIBOSOMAL PROTEIN L29"/>
    <property type="match status" value="1"/>
</dbReference>
<dbReference type="PANTHER" id="PTHR10916:SF0">
    <property type="entry name" value="LARGE RIBOSOMAL SUBUNIT PROTEIN UL29C"/>
    <property type="match status" value="1"/>
</dbReference>
<dbReference type="Pfam" id="PF00831">
    <property type="entry name" value="Ribosomal_L29"/>
    <property type="match status" value="1"/>
</dbReference>
<dbReference type="SUPFAM" id="SSF46561">
    <property type="entry name" value="Ribosomal protein L29 (L29p)"/>
    <property type="match status" value="1"/>
</dbReference>
<comment type="similarity">
    <text evidence="1">Belongs to the universal ribosomal protein uL29 family.</text>
</comment>
<evidence type="ECO:0000255" key="1">
    <source>
        <dbReference type="HAMAP-Rule" id="MF_00374"/>
    </source>
</evidence>
<evidence type="ECO:0000305" key="2"/>
<gene>
    <name evidence="1" type="primary">rpmC</name>
    <name type="ordered locus">SaurJH9_2269</name>
</gene>
<sequence>MKAKEIRDLTTSEIEEQIKSSKEELFNLRFQLATGQLEETARIRTVRKTIARLKTVAREREIEQSKANQ</sequence>
<accession>A5IV26</accession>
<name>RL29_STAA9</name>